<dbReference type="EC" id="3.6.4.-"/>
<dbReference type="EMBL" id="AY653733">
    <property type="protein sequence ID" value="AAV50283.1"/>
    <property type="molecule type" value="Genomic_DNA"/>
</dbReference>
<dbReference type="Proteomes" id="UP000001134">
    <property type="component" value="Genome"/>
</dbReference>
<dbReference type="GO" id="GO:0005524">
    <property type="term" value="F:ATP binding"/>
    <property type="evidence" value="ECO:0007669"/>
    <property type="project" value="UniProtKB-KW"/>
</dbReference>
<dbReference type="GO" id="GO:0003688">
    <property type="term" value="F:DNA replication origin binding"/>
    <property type="evidence" value="ECO:0007669"/>
    <property type="project" value="InterPro"/>
</dbReference>
<dbReference type="GO" id="GO:0004386">
    <property type="term" value="F:helicase activity"/>
    <property type="evidence" value="ECO:0007669"/>
    <property type="project" value="UniProtKB-KW"/>
</dbReference>
<dbReference type="GO" id="GO:0016787">
    <property type="term" value="F:hydrolase activity"/>
    <property type="evidence" value="ECO:0007669"/>
    <property type="project" value="UniProtKB-KW"/>
</dbReference>
<dbReference type="GO" id="GO:0006260">
    <property type="term" value="P:DNA replication"/>
    <property type="evidence" value="ECO:0007669"/>
    <property type="project" value="InterPro"/>
</dbReference>
<dbReference type="Gene3D" id="3.40.50.300">
    <property type="entry name" value="P-loop containing nucleotide triphosphate hydrolases"/>
    <property type="match status" value="1"/>
</dbReference>
<dbReference type="InterPro" id="IPR027417">
    <property type="entry name" value="P-loop_NTPase"/>
</dbReference>
<dbReference type="InterPro" id="IPR003450">
    <property type="entry name" value="Replication_origin-bd"/>
</dbReference>
<dbReference type="Pfam" id="PF02399">
    <property type="entry name" value="Herpes_ori_bp"/>
    <property type="match status" value="2"/>
</dbReference>
<dbReference type="Pfam" id="PF03121">
    <property type="entry name" value="Herpes_UL52"/>
    <property type="match status" value="1"/>
</dbReference>
<dbReference type="SUPFAM" id="SSF52540">
    <property type="entry name" value="P-loop containing nucleoside triphosphate hydrolases"/>
    <property type="match status" value="1"/>
</dbReference>
<sequence>MIKKIMKMAKIYKSKNAMIDAVPVIDRESKMFLQYPVNSNGCCNFTVIDKDKDFFSNIKSTKSNSKFLQEMFIDGTKRKPYLDIEHYYPSEKEFKKDFKRIIPQIVNDIIQVFAKEYDQVIKLSDVLLLNSSGQSSDGYKLSVHVVVSPKNKTFYYTNSKKIENNTAYHLYASLININSEYKDKENFNDKPHGYLDEQVYRKDATLRMIGSCKYPTGDRCLDPIDSKTLEKLDLTDKQKLNYLISYIDDTKPTILLETPIIQQTTISKTKIQHNEPTKTNINNKLLDLVKKYHPSAKQYGSSKEGYYNFNYDNRTEKCPLSGVTHDSNGFYVIEKSSGCFLKCYSKKCHGKSMHLGYVDETDQFVDEAHQINTKYLLQDPLVPKLLEDWINKGKTFAIKSAMGTGKTYLIKHILDKYKLNKVLWITHRQTLTKSLYGSFKDYGFVSYMDTQNCLYQYDKVLVQIDSLMRIKEFDMFENKQLVKKYDLVIIDEIEGCLSHYESPYLNKPDIDSRYIFNFMIDVIRFSNKLIVLDADISIRTQLFIEHIDKITNKGGNYIMINNSYQPITKTFTITNDEGDFDTKLFADIKAKKNICVVSMSAGAVNKIAVELNKMGTKYVSHTSKSNDSLKKNLEDVNNFWKQQQVVMFSPSIISGIDFNEIHFDKMYCIIKSGNKTCDPRSFLQMVGRIRHLGDQNIFCWYQQIPIFIDKTNKIIPKLQSDVYTFDDLLSYYRYYETLRNKKIIKNVVYETVEGDDVISFVNKSVEIDLFDKISLHNEVEQLNKHQDVFLTVLNRLIMRAGNKIDFKLVLKDDKKPIMDKINNREEEINIMIDLDDSKYDIKELSTKQTNNQLTEIEKLFIKKYYFKKKLGIKKEIDKDKLRELMTKYMDKEYFIERYEILFGYKKISDSNDDSKTKEKDRIKRKIIVDFVNILIGKHYNNCLNDSKLKRIIIKDDQYSKALKKIIKESMYFSNEEKYRPLFRKKKGSLKSNPKKEKEIQFYTSTLVRLLREYNIILKVESRKKTNGKSSYLRSLSVDKQIKDVVENKYNHQ</sequence>
<gene>
    <name type="ordered locus">MIMI_R8</name>
</gene>
<proteinExistence type="inferred from homology"/>
<organism>
    <name type="scientific">Acanthamoeba polyphaga mimivirus</name>
    <name type="common">APMV</name>
    <dbReference type="NCBI Taxonomy" id="212035"/>
    <lineage>
        <taxon>Viruses</taxon>
        <taxon>Varidnaviria</taxon>
        <taxon>Bamfordvirae</taxon>
        <taxon>Nucleocytoviricota</taxon>
        <taxon>Megaviricetes</taxon>
        <taxon>Imitervirales</taxon>
        <taxon>Mimiviridae</taxon>
        <taxon>Megamimivirinae</taxon>
        <taxon>Mimivirus</taxon>
        <taxon>Mimivirus bradfordmassiliense</taxon>
    </lineage>
</organism>
<evidence type="ECO:0000250" key="1"/>
<evidence type="ECO:0000305" key="2"/>
<feature type="chain" id="PRO_0000253255" description="Uncharacterized putative helicase R8">
    <location>
        <begin position="1"/>
        <end position="1052"/>
    </location>
</feature>
<feature type="domain" description="Helicase ATP-binding">
    <location>
        <begin position="389"/>
        <end position="561"/>
    </location>
</feature>
<feature type="binding site" evidence="1">
    <location>
        <begin position="400"/>
        <end position="407"/>
    </location>
    <ligand>
        <name>ATP</name>
        <dbReference type="ChEBI" id="CHEBI:30616"/>
    </ligand>
</feature>
<keyword id="KW-0067">ATP-binding</keyword>
<keyword id="KW-0347">Helicase</keyword>
<keyword id="KW-0378">Hydrolase</keyword>
<keyword id="KW-0547">Nucleotide-binding</keyword>
<keyword id="KW-1185">Reference proteome</keyword>
<protein>
    <recommendedName>
        <fullName>Uncharacterized putative helicase R8</fullName>
        <ecNumber>3.6.4.-</ecNumber>
    </recommendedName>
</protein>
<reference key="1">
    <citation type="journal article" date="2004" name="Science">
        <title>The 1.2-megabase genome sequence of Mimivirus.</title>
        <authorList>
            <person name="Raoult D."/>
            <person name="Audic S."/>
            <person name="Robert C."/>
            <person name="Abergel C."/>
            <person name="Renesto P."/>
            <person name="Ogata H."/>
            <person name="La Scola B."/>
            <person name="Susan M."/>
            <person name="Claverie J.-M."/>
        </authorList>
    </citation>
    <scope>NUCLEOTIDE SEQUENCE [LARGE SCALE GENOMIC DNA]</scope>
    <source>
        <strain>Rowbotham-Bradford</strain>
    </source>
</reference>
<comment type="similarity">
    <text evidence="2">Belongs to the mimivirus R1 family.</text>
</comment>
<name>YR008_MIMIV</name>
<organismHost>
    <name type="scientific">Acanthamoeba polyphaga</name>
    <name type="common">Amoeba</name>
    <dbReference type="NCBI Taxonomy" id="5757"/>
</organismHost>
<accession>Q5UP79</accession>